<comment type="similarity">
    <text evidence="2">Belongs to the universal ribosomal protein uS11 family.</text>
</comment>
<organism>
    <name type="scientific">Trypanosoma brucei brucei</name>
    <dbReference type="NCBI Taxonomy" id="5702"/>
    <lineage>
        <taxon>Eukaryota</taxon>
        <taxon>Discoba</taxon>
        <taxon>Euglenozoa</taxon>
        <taxon>Kinetoplastea</taxon>
        <taxon>Metakinetoplastina</taxon>
        <taxon>Trypanosomatida</taxon>
        <taxon>Trypanosomatidae</taxon>
        <taxon>Trypanosoma</taxon>
    </lineage>
</organism>
<sequence length="144" mass="15513">MSKKQEVKYYGSSAGKDQLVYGVVHIYASFNDTFVHVTDMSGRETFCKVTGGMKVKADRDESSPYAAMMAAQDVVARCKECGINALHVKMRATGGVGTKSPGPGAQAALRALARAGMKIGRIEDVTPVPTDSTRRKGSRRGRRL</sequence>
<accession>P19800</accession>
<reference key="1">
    <citation type="journal article" date="1990" name="Mol. Cell. Biol.">
        <title>Lack of introns in the ribosomal protein gene S14 of trypanosomes.</title>
        <authorList>
            <person name="Perelman D."/>
            <person name="Boothroyd J.C."/>
        </authorList>
    </citation>
    <scope>NUCLEOTIDE SEQUENCE [GENOMIC DNA]</scope>
    <source>
        <strain>427</strain>
    </source>
</reference>
<protein>
    <recommendedName>
        <fullName evidence="2">Small ribosomal subunit protein uS11</fullName>
    </recommendedName>
    <alternativeName>
        <fullName>40S ribosomal protein S14</fullName>
    </alternativeName>
</protein>
<feature type="chain" id="PRO_0000123354" description="Small ribosomal subunit protein uS11">
    <location>
        <begin position="1"/>
        <end position="144"/>
    </location>
</feature>
<feature type="region of interest" description="Disordered" evidence="1">
    <location>
        <begin position="123"/>
        <end position="144"/>
    </location>
</feature>
<feature type="compositionally biased region" description="Basic residues" evidence="1">
    <location>
        <begin position="135"/>
        <end position="144"/>
    </location>
</feature>
<proteinExistence type="evidence at protein level"/>
<evidence type="ECO:0000256" key="1">
    <source>
        <dbReference type="SAM" id="MobiDB-lite"/>
    </source>
</evidence>
<evidence type="ECO:0000305" key="2"/>
<gene>
    <name type="primary">RPS14</name>
</gene>
<keyword id="KW-0002">3D-structure</keyword>
<keyword id="KW-0687">Ribonucleoprotein</keyword>
<keyword id="KW-0689">Ribosomal protein</keyword>
<name>RS14_TRYBB</name>
<dbReference type="EMBL" id="M36124">
    <property type="protein sequence ID" value="AAA30237.1"/>
    <property type="molecule type" value="Genomic_DNA"/>
</dbReference>
<dbReference type="PIR" id="A36335">
    <property type="entry name" value="A36335"/>
</dbReference>
<dbReference type="PDB" id="8OVA">
    <property type="method" value="EM"/>
    <property type="resolution" value="2.47 A"/>
    <property type="chains" value="AH=1-144"/>
</dbReference>
<dbReference type="PDB" id="8OVE">
    <property type="method" value="EM"/>
    <property type="resolution" value="2.60 A"/>
    <property type="chains" value="AH=1-144"/>
</dbReference>
<dbReference type="PDBsum" id="8OVA"/>
<dbReference type="PDBsum" id="8OVE"/>
<dbReference type="EMDB" id="EMD-17208"/>
<dbReference type="EMDB" id="EMD-17212"/>
<dbReference type="SMR" id="P19800"/>
<dbReference type="OMA" id="KWGVAHI"/>
<dbReference type="GO" id="GO:1990904">
    <property type="term" value="C:ribonucleoprotein complex"/>
    <property type="evidence" value="ECO:0007669"/>
    <property type="project" value="UniProtKB-KW"/>
</dbReference>
<dbReference type="GO" id="GO:0005840">
    <property type="term" value="C:ribosome"/>
    <property type="evidence" value="ECO:0007669"/>
    <property type="project" value="UniProtKB-KW"/>
</dbReference>
<dbReference type="GO" id="GO:0003735">
    <property type="term" value="F:structural constituent of ribosome"/>
    <property type="evidence" value="ECO:0007669"/>
    <property type="project" value="InterPro"/>
</dbReference>
<dbReference type="GO" id="GO:0006412">
    <property type="term" value="P:translation"/>
    <property type="evidence" value="ECO:0007669"/>
    <property type="project" value="InterPro"/>
</dbReference>
<dbReference type="FunFam" id="3.30.420.80:FF:000002">
    <property type="entry name" value="40S ribosomal protein S14"/>
    <property type="match status" value="1"/>
</dbReference>
<dbReference type="Gene3D" id="3.30.420.80">
    <property type="entry name" value="Ribosomal protein S11"/>
    <property type="match status" value="1"/>
</dbReference>
<dbReference type="HAMAP" id="MF_01310">
    <property type="entry name" value="Ribosomal_uS11"/>
    <property type="match status" value="1"/>
</dbReference>
<dbReference type="InterPro" id="IPR001971">
    <property type="entry name" value="Ribosomal_uS11"/>
</dbReference>
<dbReference type="InterPro" id="IPR018102">
    <property type="entry name" value="Ribosomal_uS11_CS"/>
</dbReference>
<dbReference type="InterPro" id="IPR036967">
    <property type="entry name" value="Ribosomal_uS11_sf"/>
</dbReference>
<dbReference type="NCBIfam" id="NF007176">
    <property type="entry name" value="PRK09607.1"/>
    <property type="match status" value="1"/>
</dbReference>
<dbReference type="PANTHER" id="PTHR11759">
    <property type="entry name" value="40S RIBOSOMAL PROTEIN S14/30S RIBOSOMAL PROTEIN S11"/>
    <property type="match status" value="1"/>
</dbReference>
<dbReference type="Pfam" id="PF00411">
    <property type="entry name" value="Ribosomal_S11"/>
    <property type="match status" value="1"/>
</dbReference>
<dbReference type="PIRSF" id="PIRSF002131">
    <property type="entry name" value="Ribosomal_S11"/>
    <property type="match status" value="1"/>
</dbReference>
<dbReference type="SUPFAM" id="SSF53137">
    <property type="entry name" value="Translational machinery components"/>
    <property type="match status" value="1"/>
</dbReference>
<dbReference type="PROSITE" id="PS00054">
    <property type="entry name" value="RIBOSOMAL_S11"/>
    <property type="match status" value="1"/>
</dbReference>